<gene>
    <name type="primary">NR0B2</name>
    <name type="synonym">SHP</name>
</gene>
<name>NR0B2_HUMAN</name>
<protein>
    <recommendedName>
        <fullName>Nuclear receptor subfamily 0 group B member 2</fullName>
    </recommendedName>
    <alternativeName>
        <fullName>Orphan nuclear receptor SHP</fullName>
    </alternativeName>
    <alternativeName>
        <fullName>Small heterodimer partner</fullName>
    </alternativeName>
</protein>
<proteinExistence type="evidence at protein level"/>
<comment type="function">
    <text evidence="2 5 7">Transcriptional regulator that acts as a negative regulator of receptor-dependent signaling pathways (PubMed:22504882). Specifically inhibits transactivation of the nuclear receptor with which it interacts (PubMed:22504882). Inhibits transcriptional activity of NEUROD1 on E-box-containing promoter by interfering with the coactivation function of the p300/CBP-mediated transcription complex for NEUROD1 (PubMed:14752053). Essential component of the liver circadian clock which via its interaction with NR1D1 and RORG regulates NPAS2-mediated hepatic lipid metabolism (By similarity). Regulates the circadian expression of cytochrome P450 (CYP) enzymes (By similarity). Represses: NR5A2 and HNF4A to down-regulate CYP2C38, NFLI3 to up-regulate CYP2A5, BHLHE41/HNF1A axis to up-regulate CYP1A2, CYP2E1 and CYP3A11, and NR1D1 to up-regulate CYP2B10, CYP4A10 and CYP4A14 (By similarity).</text>
</comment>
<comment type="subunit">
    <text evidence="1 2 5 7 8">Interacts (via N-terminus) with NEUROD1 (via N-terminus and C-terminus) (PubMed:14752053). Interacts with ID2 (PubMed:14752053). Interacts with RORG, NFIL3, NR1D1 and BHLHE41 (By similarity). Heterodimer; efficient DNA binding requires dimerization with another bHLH protein (PubMed:14752053). Interacts with RARA, RXRA, THRB, NR5A1, NR5A2, NR1I3, PPARA, PPARG and EID1 (PubMed:22504882). Interacts with HNF4A; the resulting heterodimer is transcriptionally inactive (PubMed:28128295). Interacts with DDX3X; this interaction disrupts the interaction between HNF4 and NR0B2/SHP that forms inactive heterodimers and enhances the formation of active HNF4 homodimers (PubMed:28128295).</text>
</comment>
<comment type="interaction">
    <interactant intactId="EBI-3910729">
        <id>Q15466</id>
    </interactant>
    <interactant intactId="EBI-946046">
        <id>P54252</id>
        <label>ATXN3</label>
    </interactant>
    <organismsDiffer>false</organismsDiffer>
    <experiments>3</experiments>
</comment>
<comment type="interaction">
    <interactant intactId="EBI-3910729">
        <id>Q15466</id>
    </interactant>
    <interactant intactId="EBI-14151404">
        <id>Q96AQ7</id>
        <label>CIDEC</label>
    </interactant>
    <organismsDiffer>false</organismsDiffer>
    <experiments>3</experiments>
</comment>
<comment type="interaction">
    <interactant intactId="EBI-3910729">
        <id>Q15466</id>
    </interactant>
    <interactant intactId="EBI-10968534">
        <id>P50570-2</id>
        <label>DNM2</label>
    </interactant>
    <organismsDiffer>false</organismsDiffer>
    <experiments>3</experiments>
</comment>
<comment type="interaction">
    <interactant intactId="EBI-3910729">
        <id>Q15466</id>
    </interactant>
    <interactant intactId="EBI-12001340">
        <id>P62508-3</id>
        <label>ESRRG</label>
    </interactant>
    <organismsDiffer>false</organismsDiffer>
    <experiments>3</experiments>
</comment>
<comment type="interaction">
    <interactant intactId="EBI-3910729">
        <id>Q15466</id>
    </interactant>
    <interactant intactId="EBI-347538">
        <id>Q9Y4H4</id>
        <label>GPSM3</label>
    </interactant>
    <organismsDiffer>false</organismsDiffer>
    <experiments>3</experiments>
</comment>
<comment type="interaction">
    <interactant intactId="EBI-3910729">
        <id>Q15466</id>
    </interactant>
    <interactant intactId="EBI-301834">
        <id>Q13547</id>
        <label>HDAC1</label>
    </interactant>
    <organismsDiffer>false</organismsDiffer>
    <experiments>2</experiments>
</comment>
<comment type="interaction">
    <interactant intactId="EBI-3910729">
        <id>Q15466</id>
    </interactant>
    <interactant intactId="EBI-607682">
        <id>O15379</id>
        <label>HDAC3</label>
    </interactant>
    <organismsDiffer>false</organismsDiffer>
    <experiments>2</experiments>
</comment>
<comment type="interaction">
    <interactant intactId="EBI-3910729">
        <id>Q15466</id>
    </interactant>
    <interactant intactId="EBI-389668">
        <id>Q00987</id>
        <label>MDM2</label>
    </interactant>
    <organismsDiffer>false</organismsDiffer>
    <experiments>4</experiments>
</comment>
<comment type="interaction">
    <interactant intactId="EBI-3910729">
        <id>Q15466</id>
    </interactant>
    <interactant intactId="EBI-15960777">
        <id>O00482-1</id>
        <label>NR5A2</label>
    </interactant>
    <organismsDiffer>false</organismsDiffer>
    <experiments>2</experiments>
</comment>
<comment type="interaction">
    <interactant intactId="EBI-3910729">
        <id>Q15466</id>
    </interactant>
    <interactant intactId="EBI-1802965">
        <id>Q96EB6</id>
        <label>SIRT1</label>
    </interactant>
    <organismsDiffer>false</organismsDiffer>
    <experiments>6</experiments>
</comment>
<comment type="interaction">
    <interactant intactId="EBI-3910729">
        <id>Q15466</id>
    </interactant>
    <interactant intactId="EBI-366083">
        <id>P04637</id>
        <label>TP53</label>
    </interactant>
    <organismsDiffer>false</organismsDiffer>
    <experiments>3</experiments>
</comment>
<comment type="subcellular location">
    <subcellularLocation>
        <location evidence="5 9">Nucleus</location>
    </subcellularLocation>
    <subcellularLocation>
        <location evidence="5">Cytoplasm</location>
    </subcellularLocation>
    <text>Colocalizes with NEUROD1 in the nucleus.</text>
</comment>
<comment type="tissue specificity">
    <text evidence="10">Liver. Low levels of expression were detected in heart and pancreas.</text>
</comment>
<comment type="PTM">
    <text evidence="2">Arginine methylation by PRMT5 enhances repression activity of metabolic genes in liver in response to bile acid signaling, by increasing interaction with cofactors.</text>
</comment>
<comment type="disease" evidence="4">
    <disease id="DI-01221">
        <name>Obesity</name>
        <acronym>OBESITY</acronym>
        <description>A condition characterized by an increase of body weight beyond the limitation of skeletal and physical requirements, as the result of excessive accumulation of body fat.</description>
        <dbReference type="MIM" id="601665"/>
    </disease>
    <text>Disease susceptibility is associated with variants affecting the gene represented in this entry.</text>
</comment>
<comment type="similarity">
    <text evidence="11">Belongs to the nuclear hormone receptor family. NR0 subfamily.</text>
</comment>
<feature type="chain" id="PRO_0000053752" description="Nuclear receptor subfamily 0 group B member 2">
    <location>
        <begin position="1"/>
        <end position="257"/>
    </location>
</feature>
<feature type="domain" description="NR LBD" evidence="3">
    <location>
        <begin position="16"/>
        <end position="257"/>
    </location>
</feature>
<feature type="modified residue" description="Symmetric dimethylarginine; by PRMT5" evidence="2">
    <location>
        <position position="57"/>
    </location>
</feature>
<feature type="sequence variant" id="VAR_026015" description="In early-onset obesity; Japanese population; loss of methylation and repressor activity; dbSNP:rs777291973." evidence="4 6">
    <original>R</original>
    <variation>W</variation>
    <location>
        <position position="57"/>
    </location>
</feature>
<feature type="sequence variant" id="VAR_050584" description="In dbSNP:rs6659176.">
    <original>G</original>
    <variation>A</variation>
    <location>
        <position position="171"/>
    </location>
</feature>
<feature type="sequence variant" id="VAR_026016" description="In early-onset obesity; Japanese population; strong decrease of repressor activity; dbSNP:rs202154574." evidence="4">
    <original>G</original>
    <variation>E</variation>
    <location>
        <position position="189"/>
    </location>
</feature>
<feature type="sequence variant" id="VAR_026017" description="In early-onset obesity; Japanese population; slight decrease of repressor activity; dbSNP:rs74315350." evidence="4">
    <original>A</original>
    <variation>S</variation>
    <location>
        <position position="195"/>
    </location>
</feature>
<feature type="sequence variant" id="VAR_026018" description="In early-onset obesity; Japanese population; loss of repressor activity; dbSNP:rs199976415." evidence="4">
    <original>R</original>
    <variation>C</variation>
    <location>
        <position position="213"/>
    </location>
</feature>
<feature type="sequence variant" id="VAR_026019" description="No effect on repressor activity; dbSNP:rs200475847." evidence="4">
    <original>R</original>
    <variation>H</variation>
    <location>
        <position position="216"/>
    </location>
</feature>
<feature type="helix" evidence="14">
    <location>
        <begin position="14"/>
        <end position="16"/>
    </location>
</feature>
<feature type="helix" evidence="15">
    <location>
        <begin position="19"/>
        <end position="25"/>
    </location>
</feature>
<feature type="helix" evidence="13">
    <location>
        <begin position="118"/>
        <end position="122"/>
    </location>
</feature>
<dbReference type="EMBL" id="L76571">
    <property type="protein sequence ID" value="AAC41998.1"/>
    <property type="molecule type" value="Genomic_DNA"/>
</dbReference>
<dbReference type="EMBL" id="AB058644">
    <property type="protein sequence ID" value="BAB68530.1"/>
    <property type="molecule type" value="Genomic_DNA"/>
</dbReference>
<dbReference type="EMBL" id="HQ692833">
    <property type="protein sequence ID" value="ADZ17344.1"/>
    <property type="molecule type" value="mRNA"/>
</dbReference>
<dbReference type="EMBL" id="AL356390">
    <property type="status" value="NOT_ANNOTATED_CDS"/>
    <property type="molecule type" value="Genomic_DNA"/>
</dbReference>
<dbReference type="EMBL" id="CH471059">
    <property type="protein sequence ID" value="EAX07781.1"/>
    <property type="molecule type" value="Genomic_DNA"/>
</dbReference>
<dbReference type="EMBL" id="BC030207">
    <property type="protein sequence ID" value="AAH30207.1"/>
    <property type="molecule type" value="mRNA"/>
</dbReference>
<dbReference type="CCDS" id="CCDS291.1"/>
<dbReference type="RefSeq" id="NP_068804.1">
    <property type="nucleotide sequence ID" value="NM_021969.3"/>
</dbReference>
<dbReference type="PDB" id="1YUC">
    <property type="method" value="X-ray"/>
    <property type="resolution" value="1.90 A"/>
    <property type="chains" value="C/D=15-28"/>
</dbReference>
<dbReference type="PDB" id="2Q3Y">
    <property type="method" value="X-ray"/>
    <property type="resolution" value="2.40 A"/>
    <property type="chains" value="B=18-27"/>
</dbReference>
<dbReference type="PDB" id="2Z4J">
    <property type="method" value="X-ray"/>
    <property type="resolution" value="2.60 A"/>
    <property type="chains" value="B=115-124"/>
</dbReference>
<dbReference type="PDB" id="4DOR">
    <property type="method" value="X-ray"/>
    <property type="resolution" value="1.90 A"/>
    <property type="chains" value="C/D=15-28"/>
</dbReference>
<dbReference type="PDB" id="4ONI">
    <property type="method" value="X-ray"/>
    <property type="resolution" value="1.80 A"/>
    <property type="chains" value="C/D=12-30"/>
</dbReference>
<dbReference type="PDB" id="5UFS">
    <property type="method" value="X-ray"/>
    <property type="resolution" value="2.12 A"/>
    <property type="chains" value="C/D=18-27"/>
</dbReference>
<dbReference type="PDB" id="6W9M">
    <property type="method" value="X-ray"/>
    <property type="resolution" value="1.59 A"/>
    <property type="chains" value="B=17-27"/>
</dbReference>
<dbReference type="PDB" id="7YXC">
    <property type="method" value="X-ray"/>
    <property type="resolution" value="2.25 A"/>
    <property type="chains" value="R=17-27"/>
</dbReference>
<dbReference type="PDB" id="7YXD">
    <property type="method" value="X-ray"/>
    <property type="resolution" value="2.30 A"/>
    <property type="chains" value="C/F/J/N=17-28"/>
</dbReference>
<dbReference type="PDB" id="7YXN">
    <property type="method" value="X-ray"/>
    <property type="resolution" value="2.46 A"/>
    <property type="chains" value="R/S=17-27"/>
</dbReference>
<dbReference type="PDB" id="7YXO">
    <property type="method" value="X-ray"/>
    <property type="resolution" value="2.99 A"/>
    <property type="chains" value="B/D/F=17-27"/>
</dbReference>
<dbReference type="PDB" id="7YXP">
    <property type="method" value="X-ray"/>
    <property type="resolution" value="3.36 A"/>
    <property type="chains" value="B=16-28"/>
</dbReference>
<dbReference type="PDB" id="7YXR">
    <property type="method" value="X-ray"/>
    <property type="resolution" value="2.50 A"/>
    <property type="chains" value="R/S=17-28"/>
</dbReference>
<dbReference type="PDBsum" id="1YUC"/>
<dbReference type="PDBsum" id="2Q3Y"/>
<dbReference type="PDBsum" id="2Z4J"/>
<dbReference type="PDBsum" id="4DOR"/>
<dbReference type="PDBsum" id="4ONI"/>
<dbReference type="PDBsum" id="5UFS"/>
<dbReference type="PDBsum" id="6W9M"/>
<dbReference type="PDBsum" id="7YXC"/>
<dbReference type="PDBsum" id="7YXD"/>
<dbReference type="PDBsum" id="7YXN"/>
<dbReference type="PDBsum" id="7YXO"/>
<dbReference type="PDBsum" id="7YXP"/>
<dbReference type="PDBsum" id="7YXR"/>
<dbReference type="SMR" id="Q15466"/>
<dbReference type="BioGRID" id="114012">
    <property type="interactions" value="72"/>
</dbReference>
<dbReference type="CORUM" id="Q15466"/>
<dbReference type="DIP" id="DIP-46313N"/>
<dbReference type="FunCoup" id="Q15466">
    <property type="interactions" value="1362"/>
</dbReference>
<dbReference type="IntAct" id="Q15466">
    <property type="interactions" value="32"/>
</dbReference>
<dbReference type="MINT" id="Q15466"/>
<dbReference type="STRING" id="9606.ENSP00000254227"/>
<dbReference type="ChEMBL" id="CHEMBL5603"/>
<dbReference type="GuidetoPHARMACOLOGY" id="636"/>
<dbReference type="GlyGen" id="Q15466">
    <property type="glycosylation" value="2 sites, 1 O-linked glycan (1 site)"/>
</dbReference>
<dbReference type="iPTMnet" id="Q15466"/>
<dbReference type="PhosphoSitePlus" id="Q15466"/>
<dbReference type="BioMuta" id="NR0B2"/>
<dbReference type="DMDM" id="9978744"/>
<dbReference type="jPOST" id="Q15466"/>
<dbReference type="MassIVE" id="Q15466"/>
<dbReference type="PaxDb" id="9606-ENSP00000254227"/>
<dbReference type="PeptideAtlas" id="Q15466"/>
<dbReference type="Antibodypedia" id="16231">
    <property type="antibodies" value="432 antibodies from 35 providers"/>
</dbReference>
<dbReference type="DNASU" id="8431"/>
<dbReference type="Ensembl" id="ENST00000254227.4">
    <property type="protein sequence ID" value="ENSP00000254227.3"/>
    <property type="gene ID" value="ENSG00000131910.5"/>
</dbReference>
<dbReference type="GeneID" id="8431"/>
<dbReference type="KEGG" id="hsa:8431"/>
<dbReference type="MANE-Select" id="ENST00000254227.4">
    <property type="protein sequence ID" value="ENSP00000254227.3"/>
    <property type="RefSeq nucleotide sequence ID" value="NM_021969.3"/>
    <property type="RefSeq protein sequence ID" value="NP_068804.1"/>
</dbReference>
<dbReference type="UCSC" id="uc001bnf.4">
    <property type="organism name" value="human"/>
</dbReference>
<dbReference type="AGR" id="HGNC:7961"/>
<dbReference type="CTD" id="8431"/>
<dbReference type="DisGeNET" id="8431"/>
<dbReference type="GeneCards" id="NR0B2"/>
<dbReference type="HGNC" id="HGNC:7961">
    <property type="gene designation" value="NR0B2"/>
</dbReference>
<dbReference type="HPA" id="ENSG00000131910">
    <property type="expression patterns" value="Tissue enhanced (intestine, liver)"/>
</dbReference>
<dbReference type="MalaCards" id="NR0B2"/>
<dbReference type="MIM" id="601665">
    <property type="type" value="phenotype"/>
</dbReference>
<dbReference type="MIM" id="604630">
    <property type="type" value="gene"/>
</dbReference>
<dbReference type="neXtProt" id="NX_Q15466"/>
<dbReference type="OpenTargets" id="ENSG00000131910"/>
<dbReference type="PharmGKB" id="PA31747"/>
<dbReference type="VEuPathDB" id="HostDB:ENSG00000131910"/>
<dbReference type="eggNOG" id="KOG3575">
    <property type="taxonomic scope" value="Eukaryota"/>
</dbReference>
<dbReference type="GeneTree" id="ENSGT00390000015719"/>
<dbReference type="HOGENOM" id="CLU_093194_0_0_1"/>
<dbReference type="InParanoid" id="Q15466"/>
<dbReference type="OMA" id="FFRPIVG"/>
<dbReference type="OrthoDB" id="9926883at2759"/>
<dbReference type="PAN-GO" id="Q15466">
    <property type="GO annotations" value="7 GO annotations based on evolutionary models"/>
</dbReference>
<dbReference type="PhylomeDB" id="Q15466"/>
<dbReference type="TreeFam" id="TF332386"/>
<dbReference type="PathwayCommons" id="Q15466"/>
<dbReference type="Reactome" id="R-HSA-383280">
    <property type="pathway name" value="Nuclear Receptor transcription pathway"/>
</dbReference>
<dbReference type="SignaLink" id="Q15466"/>
<dbReference type="SIGNOR" id="Q15466"/>
<dbReference type="BioGRID-ORCS" id="8431">
    <property type="hits" value="25 hits in 1168 CRISPR screens"/>
</dbReference>
<dbReference type="ChiTaRS" id="NR0B2">
    <property type="organism name" value="human"/>
</dbReference>
<dbReference type="EvolutionaryTrace" id="Q15466"/>
<dbReference type="GeneWiki" id="Small_heterodimer_partner"/>
<dbReference type="GenomeRNAi" id="8431"/>
<dbReference type="Pharos" id="Q15466">
    <property type="development level" value="Tchem"/>
</dbReference>
<dbReference type="PRO" id="PR:Q15466"/>
<dbReference type="Proteomes" id="UP000005640">
    <property type="component" value="Chromosome 1"/>
</dbReference>
<dbReference type="RNAct" id="Q15466">
    <property type="molecule type" value="protein"/>
</dbReference>
<dbReference type="Bgee" id="ENSG00000131910">
    <property type="expression patterns" value="Expressed in right lobe of liver and 60 other cell types or tissues"/>
</dbReference>
<dbReference type="GO" id="GO:0000785">
    <property type="term" value="C:chromatin"/>
    <property type="evidence" value="ECO:0000314"/>
    <property type="project" value="MGI"/>
</dbReference>
<dbReference type="GO" id="GO:0005737">
    <property type="term" value="C:cytoplasm"/>
    <property type="evidence" value="ECO:0000314"/>
    <property type="project" value="UniProtKB"/>
</dbReference>
<dbReference type="GO" id="GO:0043231">
    <property type="term" value="C:intracellular membrane-bounded organelle"/>
    <property type="evidence" value="ECO:0000314"/>
    <property type="project" value="HPA"/>
</dbReference>
<dbReference type="GO" id="GO:0005654">
    <property type="term" value="C:nucleoplasm"/>
    <property type="evidence" value="ECO:0000314"/>
    <property type="project" value="HPA"/>
</dbReference>
<dbReference type="GO" id="GO:0005634">
    <property type="term" value="C:nucleus"/>
    <property type="evidence" value="ECO:0000314"/>
    <property type="project" value="UniProtKB"/>
</dbReference>
<dbReference type="GO" id="GO:0032991">
    <property type="term" value="C:protein-containing complex"/>
    <property type="evidence" value="ECO:0007669"/>
    <property type="project" value="Ensembl"/>
</dbReference>
<dbReference type="GO" id="GO:0046965">
    <property type="term" value="F:nuclear retinoid X receptor binding"/>
    <property type="evidence" value="ECO:0007669"/>
    <property type="project" value="Ensembl"/>
</dbReference>
<dbReference type="GO" id="GO:0046966">
    <property type="term" value="F:nuclear thyroid hormone receptor binding"/>
    <property type="evidence" value="ECO:0007669"/>
    <property type="project" value="Ensembl"/>
</dbReference>
<dbReference type="GO" id="GO:0042975">
    <property type="term" value="F:peroxisome proliferator activated receptor binding"/>
    <property type="evidence" value="ECO:0007669"/>
    <property type="project" value="Ensembl"/>
</dbReference>
<dbReference type="GO" id="GO:0019904">
    <property type="term" value="F:protein domain specific binding"/>
    <property type="evidence" value="ECO:0000353"/>
    <property type="project" value="UniProtKB"/>
</dbReference>
<dbReference type="GO" id="GO:0042803">
    <property type="term" value="F:protein homodimerization activity"/>
    <property type="evidence" value="ECO:0000353"/>
    <property type="project" value="UniProtKB"/>
</dbReference>
<dbReference type="GO" id="GO:0044877">
    <property type="term" value="F:protein-containing complex binding"/>
    <property type="evidence" value="ECO:0007669"/>
    <property type="project" value="Ensembl"/>
</dbReference>
<dbReference type="GO" id="GO:0003714">
    <property type="term" value="F:transcription corepressor activity"/>
    <property type="evidence" value="ECO:0000314"/>
    <property type="project" value="UniProtKB"/>
</dbReference>
<dbReference type="GO" id="GO:0140416">
    <property type="term" value="F:transcription regulator inhibitor activity"/>
    <property type="evidence" value="ECO:0000314"/>
    <property type="project" value="MGI"/>
</dbReference>
<dbReference type="GO" id="GO:0031100">
    <property type="term" value="P:animal organ regeneration"/>
    <property type="evidence" value="ECO:0007669"/>
    <property type="project" value="Ensembl"/>
</dbReference>
<dbReference type="GO" id="GO:0015721">
    <property type="term" value="P:bile acid and bile salt transport"/>
    <property type="evidence" value="ECO:0007669"/>
    <property type="project" value="Ensembl"/>
</dbReference>
<dbReference type="GO" id="GO:0008203">
    <property type="term" value="P:cholesterol metabolic process"/>
    <property type="evidence" value="ECO:0000304"/>
    <property type="project" value="ProtInc"/>
</dbReference>
<dbReference type="GO" id="GO:0032922">
    <property type="term" value="P:circadian regulation of gene expression"/>
    <property type="evidence" value="ECO:0000250"/>
    <property type="project" value="UniProtKB"/>
</dbReference>
<dbReference type="GO" id="GO:0007623">
    <property type="term" value="P:circadian rhythm"/>
    <property type="evidence" value="ECO:0000314"/>
    <property type="project" value="UniProtKB"/>
</dbReference>
<dbReference type="GO" id="GO:0043433">
    <property type="term" value="P:negative regulation of DNA-binding transcription factor activity"/>
    <property type="evidence" value="ECO:0000314"/>
    <property type="project" value="UniProtKB"/>
</dbReference>
<dbReference type="GO" id="GO:0045892">
    <property type="term" value="P:negative regulation of DNA-templated transcription"/>
    <property type="evidence" value="ECO:0000250"/>
    <property type="project" value="UniProtKB"/>
</dbReference>
<dbReference type="GO" id="GO:0010629">
    <property type="term" value="P:negative regulation of gene expression"/>
    <property type="evidence" value="ECO:0000315"/>
    <property type="project" value="UniProtKB"/>
</dbReference>
<dbReference type="GO" id="GO:0000122">
    <property type="term" value="P:negative regulation of transcription by RNA polymerase II"/>
    <property type="evidence" value="ECO:0000318"/>
    <property type="project" value="GO_Central"/>
</dbReference>
<dbReference type="GO" id="GO:0007219">
    <property type="term" value="P:Notch signaling pathway"/>
    <property type="evidence" value="ECO:0007669"/>
    <property type="project" value="Ensembl"/>
</dbReference>
<dbReference type="GO" id="GO:0045893">
    <property type="term" value="P:positive regulation of DNA-templated transcription"/>
    <property type="evidence" value="ECO:0000314"/>
    <property type="project" value="MGI"/>
</dbReference>
<dbReference type="GO" id="GO:0010628">
    <property type="term" value="P:positive regulation of gene expression"/>
    <property type="evidence" value="ECO:0000315"/>
    <property type="project" value="UniProtKB"/>
</dbReference>
<dbReference type="GO" id="GO:0032024">
    <property type="term" value="P:positive regulation of insulin secretion"/>
    <property type="evidence" value="ECO:0007669"/>
    <property type="project" value="Ensembl"/>
</dbReference>
<dbReference type="GO" id="GO:0045471">
    <property type="term" value="P:response to ethanol"/>
    <property type="evidence" value="ECO:0007669"/>
    <property type="project" value="Ensembl"/>
</dbReference>
<dbReference type="GO" id="GO:0009749">
    <property type="term" value="P:response to glucose"/>
    <property type="evidence" value="ECO:0007669"/>
    <property type="project" value="Ensembl"/>
</dbReference>
<dbReference type="CDD" id="cd07349">
    <property type="entry name" value="NR_LBD_SHP"/>
    <property type="match status" value="1"/>
</dbReference>
<dbReference type="FunFam" id="1.10.565.10:FF:000028">
    <property type="entry name" value="Nuclear receptor subfamily 0 group B member 2"/>
    <property type="match status" value="1"/>
</dbReference>
<dbReference type="Gene3D" id="1.10.565.10">
    <property type="entry name" value="Retinoid X Receptor"/>
    <property type="match status" value="1"/>
</dbReference>
<dbReference type="IDEAL" id="IID00081"/>
<dbReference type="InterPro" id="IPR035500">
    <property type="entry name" value="NHR-like_dom_sf"/>
</dbReference>
<dbReference type="InterPro" id="IPR033544">
    <property type="entry name" value="NR0B1/2"/>
</dbReference>
<dbReference type="InterPro" id="IPR000536">
    <property type="entry name" value="Nucl_hrmn_rcpt_lig-bd"/>
</dbReference>
<dbReference type="InterPro" id="IPR001723">
    <property type="entry name" value="Nuclear_hrmn_rcpt"/>
</dbReference>
<dbReference type="PANTHER" id="PTHR24081">
    <property type="entry name" value="NUCLEAR RECEPTOR SUBFAMILY 0 GROUP B"/>
    <property type="match status" value="1"/>
</dbReference>
<dbReference type="PANTHER" id="PTHR24081:SF0">
    <property type="entry name" value="NUCLEAR RECEPTOR SUBFAMILY 0 GROUP B MEMBER 2"/>
    <property type="match status" value="1"/>
</dbReference>
<dbReference type="Pfam" id="PF00104">
    <property type="entry name" value="Hormone_recep"/>
    <property type="match status" value="1"/>
</dbReference>
<dbReference type="PRINTS" id="PR00398">
    <property type="entry name" value="STRDHORMONER"/>
</dbReference>
<dbReference type="SMART" id="SM00430">
    <property type="entry name" value="HOLI"/>
    <property type="match status" value="1"/>
</dbReference>
<dbReference type="SUPFAM" id="SSF48508">
    <property type="entry name" value="Nuclear receptor ligand-binding domain"/>
    <property type="match status" value="1"/>
</dbReference>
<dbReference type="PROSITE" id="PS51843">
    <property type="entry name" value="NR_LBD"/>
    <property type="match status" value="1"/>
</dbReference>
<accession>Q15466</accession>
<accession>F1D8P5</accession>
<accession>Q5QP36</accession>
<sequence length="257" mass="28058">MSTSQPGACPCQGAASRPAILYALLSSSLKAVPRPRSRCLCRQHRPVQLCAPHRTCREALDVLAKTVAFLRNLPSFWQLPPQDQRRLLQGCWGPLFLLGLAQDAVTFEVAEAPVPSILKKILLEEPSSSGGSGQLPDRPQPSLAAVQWLQCCLESFWSLELSPKEYACLKGTILFNPDVPGLQAASHIGHLQQEAHWVLCEVLEPWCPAAQGRLTRVLLTASTLKSIPTSLLGDLFFRPIIGDVDIAGLLGDMLLLR</sequence>
<keyword id="KW-0002">3D-structure</keyword>
<keyword id="KW-0090">Biological rhythms</keyword>
<keyword id="KW-0963">Cytoplasm</keyword>
<keyword id="KW-0225">Disease variant</keyword>
<keyword id="KW-0488">Methylation</keyword>
<keyword id="KW-0539">Nucleus</keyword>
<keyword id="KW-0550">Obesity</keyword>
<keyword id="KW-0675">Receptor</keyword>
<keyword id="KW-1185">Reference proteome</keyword>
<keyword id="KW-0678">Repressor</keyword>
<keyword id="KW-0804">Transcription</keyword>
<keyword id="KW-0805">Transcription regulation</keyword>
<organism>
    <name type="scientific">Homo sapiens</name>
    <name type="common">Human</name>
    <dbReference type="NCBI Taxonomy" id="9606"/>
    <lineage>
        <taxon>Eukaryota</taxon>
        <taxon>Metazoa</taxon>
        <taxon>Chordata</taxon>
        <taxon>Craniata</taxon>
        <taxon>Vertebrata</taxon>
        <taxon>Euteleostomi</taxon>
        <taxon>Mammalia</taxon>
        <taxon>Eutheria</taxon>
        <taxon>Euarchontoglires</taxon>
        <taxon>Primates</taxon>
        <taxon>Haplorrhini</taxon>
        <taxon>Catarrhini</taxon>
        <taxon>Hominidae</taxon>
        <taxon>Homo</taxon>
    </lineage>
</organism>
<evidence type="ECO:0000250" key="1">
    <source>
        <dbReference type="UniProtKB" id="P97947"/>
    </source>
</evidence>
<evidence type="ECO:0000250" key="2">
    <source>
        <dbReference type="UniProtKB" id="Q62227"/>
    </source>
</evidence>
<evidence type="ECO:0000255" key="3">
    <source>
        <dbReference type="PROSITE-ProRule" id="PRU01189"/>
    </source>
</evidence>
<evidence type="ECO:0000269" key="4">
    <source>
    </source>
</evidence>
<evidence type="ECO:0000269" key="5">
    <source>
    </source>
</evidence>
<evidence type="ECO:0000269" key="6">
    <source>
    </source>
</evidence>
<evidence type="ECO:0000269" key="7">
    <source>
    </source>
</evidence>
<evidence type="ECO:0000269" key="8">
    <source>
    </source>
</evidence>
<evidence type="ECO:0000269" key="9">
    <source>
    </source>
</evidence>
<evidence type="ECO:0000269" key="10">
    <source>
    </source>
</evidence>
<evidence type="ECO:0000305" key="11"/>
<evidence type="ECO:0007744" key="12">
    <source>
        <dbReference type="PDB" id="4DOR"/>
    </source>
</evidence>
<evidence type="ECO:0007829" key="13">
    <source>
        <dbReference type="PDB" id="2Z4J"/>
    </source>
</evidence>
<evidence type="ECO:0007829" key="14">
    <source>
        <dbReference type="PDB" id="4ONI"/>
    </source>
</evidence>
<evidence type="ECO:0007829" key="15">
    <source>
        <dbReference type="PDB" id="6W9M"/>
    </source>
</evidence>
<reference key="1">
    <citation type="journal article" date="1996" name="Science">
        <title>An orphan nuclear hormone receptor that lacks a DNA binding domain and heterodimerizes with other receptors.</title>
        <authorList>
            <person name="Seol W."/>
            <person name="Choi H.-S."/>
            <person name="Moore D.D."/>
        </authorList>
    </citation>
    <scope>NUCLEOTIDE SEQUENCE [GENOMIC DNA]</scope>
    <scope>TISSUE SPECIFICITY</scope>
</reference>
<reference key="2">
    <citation type="journal article" date="1998" name="J. Biol. Chem.">
        <title>Structure and expression of the orphan nuclear receptor SHP gene.</title>
        <authorList>
            <person name="Lee H.-K."/>
            <person name="Lee Y.-K."/>
            <person name="Park S.-H."/>
            <person name="Kim Y.-S."/>
            <person name="Park S.H."/>
            <person name="Lee J.W."/>
            <person name="Kwon H.-B."/>
            <person name="Soh J."/>
            <person name="Moore D.D."/>
            <person name="Choi H.-S."/>
        </authorList>
    </citation>
    <scope>NUCLEOTIDE SEQUENCE [GENOMIC DNA]</scope>
</reference>
<reference key="3">
    <citation type="journal article" date="2001" name="Proc. Natl. Acad. Sci. U.S.A.">
        <title>Mutations in the small heterodimer partner gene are associated with mild obesity in Japanese subjects.</title>
        <authorList>
            <person name="Nishigori H."/>
            <person name="Tomura H."/>
            <person name="Tonooka N."/>
            <person name="Kanamori M."/>
            <person name="Yamada S."/>
            <person name="Sho K."/>
            <person name="Inoue I."/>
            <person name="Kikuchi N."/>
            <person name="Onigata K."/>
            <person name="Kojima I."/>
            <person name="Kohama T."/>
            <person name="Yamagata K."/>
            <person name="Yang Q."/>
            <person name="Matsuzawa Y."/>
            <person name="Miki T."/>
            <person name="Seino S."/>
            <person name="Kim M.-Y."/>
            <person name="Choi H.-S."/>
            <person name="Lee Y.-K."/>
            <person name="Moore D.D."/>
            <person name="Takeda J."/>
        </authorList>
    </citation>
    <scope>NUCLEOTIDE SEQUENCE [GENOMIC DNA]</scope>
    <scope>VARIANTS EARLY-ONSET OBESITY TRP-57; GLU-189; SER-195 AND CYS-213</scope>
    <scope>VARIANT HIS-216</scope>
    <scope>CHARACTERIZATION OF VARIANTS EARLY-ONSET OBESITY TRP-57; GLU-189; SER-195 AND CYS-213</scope>
    <scope>CHARACTERIZATION OF VARIANT HIS-216</scope>
</reference>
<reference key="4">
    <citation type="submission" date="2010-12" db="EMBL/GenBank/DDBJ databases">
        <title>Isolation of cDNA coding for multiple human nuclear receptor clones.</title>
        <authorList>
            <person name="Kaighin V.A."/>
            <person name="Martin A.L."/>
            <person name="Aronstam R.S."/>
        </authorList>
    </citation>
    <scope>NUCLEOTIDE SEQUENCE [LARGE SCALE MRNA]</scope>
    <source>
        <tissue>Kidney</tissue>
    </source>
</reference>
<reference key="5">
    <citation type="journal article" date="2006" name="Nature">
        <title>The DNA sequence and biological annotation of human chromosome 1.</title>
        <authorList>
            <person name="Gregory S.G."/>
            <person name="Barlow K.F."/>
            <person name="McLay K.E."/>
            <person name="Kaul R."/>
            <person name="Swarbreck D."/>
            <person name="Dunham A."/>
            <person name="Scott C.E."/>
            <person name="Howe K.L."/>
            <person name="Woodfine K."/>
            <person name="Spencer C.C.A."/>
            <person name="Jones M.C."/>
            <person name="Gillson C."/>
            <person name="Searle S."/>
            <person name="Zhou Y."/>
            <person name="Kokocinski F."/>
            <person name="McDonald L."/>
            <person name="Evans R."/>
            <person name="Phillips K."/>
            <person name="Atkinson A."/>
            <person name="Cooper R."/>
            <person name="Jones C."/>
            <person name="Hall R.E."/>
            <person name="Andrews T.D."/>
            <person name="Lloyd C."/>
            <person name="Ainscough R."/>
            <person name="Almeida J.P."/>
            <person name="Ambrose K.D."/>
            <person name="Anderson F."/>
            <person name="Andrew R.W."/>
            <person name="Ashwell R.I.S."/>
            <person name="Aubin K."/>
            <person name="Babbage A.K."/>
            <person name="Bagguley C.L."/>
            <person name="Bailey J."/>
            <person name="Beasley H."/>
            <person name="Bethel G."/>
            <person name="Bird C.P."/>
            <person name="Bray-Allen S."/>
            <person name="Brown J.Y."/>
            <person name="Brown A.J."/>
            <person name="Buckley D."/>
            <person name="Burton J."/>
            <person name="Bye J."/>
            <person name="Carder C."/>
            <person name="Chapman J.C."/>
            <person name="Clark S.Y."/>
            <person name="Clarke G."/>
            <person name="Clee C."/>
            <person name="Cobley V."/>
            <person name="Collier R.E."/>
            <person name="Corby N."/>
            <person name="Coville G.J."/>
            <person name="Davies J."/>
            <person name="Deadman R."/>
            <person name="Dunn M."/>
            <person name="Earthrowl M."/>
            <person name="Ellington A.G."/>
            <person name="Errington H."/>
            <person name="Frankish A."/>
            <person name="Frankland J."/>
            <person name="French L."/>
            <person name="Garner P."/>
            <person name="Garnett J."/>
            <person name="Gay L."/>
            <person name="Ghori M.R.J."/>
            <person name="Gibson R."/>
            <person name="Gilby L.M."/>
            <person name="Gillett W."/>
            <person name="Glithero R.J."/>
            <person name="Grafham D.V."/>
            <person name="Griffiths C."/>
            <person name="Griffiths-Jones S."/>
            <person name="Grocock R."/>
            <person name="Hammond S."/>
            <person name="Harrison E.S.I."/>
            <person name="Hart E."/>
            <person name="Haugen E."/>
            <person name="Heath P.D."/>
            <person name="Holmes S."/>
            <person name="Holt K."/>
            <person name="Howden P.J."/>
            <person name="Hunt A.R."/>
            <person name="Hunt S.E."/>
            <person name="Hunter G."/>
            <person name="Isherwood J."/>
            <person name="James R."/>
            <person name="Johnson C."/>
            <person name="Johnson D."/>
            <person name="Joy A."/>
            <person name="Kay M."/>
            <person name="Kershaw J.K."/>
            <person name="Kibukawa M."/>
            <person name="Kimberley A.M."/>
            <person name="King A."/>
            <person name="Knights A.J."/>
            <person name="Lad H."/>
            <person name="Laird G."/>
            <person name="Lawlor S."/>
            <person name="Leongamornlert D.A."/>
            <person name="Lloyd D.M."/>
            <person name="Loveland J."/>
            <person name="Lovell J."/>
            <person name="Lush M.J."/>
            <person name="Lyne R."/>
            <person name="Martin S."/>
            <person name="Mashreghi-Mohammadi M."/>
            <person name="Matthews L."/>
            <person name="Matthews N.S.W."/>
            <person name="McLaren S."/>
            <person name="Milne S."/>
            <person name="Mistry S."/>
            <person name="Moore M.J.F."/>
            <person name="Nickerson T."/>
            <person name="O'Dell C.N."/>
            <person name="Oliver K."/>
            <person name="Palmeiri A."/>
            <person name="Palmer S.A."/>
            <person name="Parker A."/>
            <person name="Patel D."/>
            <person name="Pearce A.V."/>
            <person name="Peck A.I."/>
            <person name="Pelan S."/>
            <person name="Phelps K."/>
            <person name="Phillimore B.J."/>
            <person name="Plumb R."/>
            <person name="Rajan J."/>
            <person name="Raymond C."/>
            <person name="Rouse G."/>
            <person name="Saenphimmachak C."/>
            <person name="Sehra H.K."/>
            <person name="Sheridan E."/>
            <person name="Shownkeen R."/>
            <person name="Sims S."/>
            <person name="Skuce C.D."/>
            <person name="Smith M."/>
            <person name="Steward C."/>
            <person name="Subramanian S."/>
            <person name="Sycamore N."/>
            <person name="Tracey A."/>
            <person name="Tromans A."/>
            <person name="Van Helmond Z."/>
            <person name="Wall M."/>
            <person name="Wallis J.M."/>
            <person name="White S."/>
            <person name="Whitehead S.L."/>
            <person name="Wilkinson J.E."/>
            <person name="Willey D.L."/>
            <person name="Williams H."/>
            <person name="Wilming L."/>
            <person name="Wray P.W."/>
            <person name="Wu Z."/>
            <person name="Coulson A."/>
            <person name="Vaudin M."/>
            <person name="Sulston J.E."/>
            <person name="Durbin R.M."/>
            <person name="Hubbard T."/>
            <person name="Wooster R."/>
            <person name="Dunham I."/>
            <person name="Carter N.P."/>
            <person name="McVean G."/>
            <person name="Ross M.T."/>
            <person name="Harrow J."/>
            <person name="Olson M.V."/>
            <person name="Beck S."/>
            <person name="Rogers J."/>
            <person name="Bentley D.R."/>
        </authorList>
    </citation>
    <scope>NUCLEOTIDE SEQUENCE [LARGE SCALE GENOMIC DNA]</scope>
</reference>
<reference key="6">
    <citation type="submission" date="2005-09" db="EMBL/GenBank/DDBJ databases">
        <authorList>
            <person name="Mural R.J."/>
            <person name="Istrail S."/>
            <person name="Sutton G."/>
            <person name="Florea L."/>
            <person name="Halpern A.L."/>
            <person name="Mobarry C.M."/>
            <person name="Lippert R."/>
            <person name="Walenz B."/>
            <person name="Shatkay H."/>
            <person name="Dew I."/>
            <person name="Miller J.R."/>
            <person name="Flanigan M.J."/>
            <person name="Edwards N.J."/>
            <person name="Bolanos R."/>
            <person name="Fasulo D."/>
            <person name="Halldorsson B.V."/>
            <person name="Hannenhalli S."/>
            <person name="Turner R."/>
            <person name="Yooseph S."/>
            <person name="Lu F."/>
            <person name="Nusskern D.R."/>
            <person name="Shue B.C."/>
            <person name="Zheng X.H."/>
            <person name="Zhong F."/>
            <person name="Delcher A.L."/>
            <person name="Huson D.H."/>
            <person name="Kravitz S.A."/>
            <person name="Mouchard L."/>
            <person name="Reinert K."/>
            <person name="Remington K.A."/>
            <person name="Clark A.G."/>
            <person name="Waterman M.S."/>
            <person name="Eichler E.E."/>
            <person name="Adams M.D."/>
            <person name="Hunkapiller M.W."/>
            <person name="Myers E.W."/>
            <person name="Venter J.C."/>
        </authorList>
    </citation>
    <scope>NUCLEOTIDE SEQUENCE [LARGE SCALE GENOMIC DNA]</scope>
</reference>
<reference key="7">
    <citation type="journal article" date="2004" name="Genome Res.">
        <title>The status, quality, and expansion of the NIH full-length cDNA project: the Mammalian Gene Collection (MGC).</title>
        <authorList>
            <consortium name="The MGC Project Team"/>
        </authorList>
    </citation>
    <scope>NUCLEOTIDE SEQUENCE [LARGE SCALE MRNA]</scope>
    <source>
        <tissue>Pancreas</tissue>
        <tissue>Spleen</tissue>
    </source>
</reference>
<reference key="8">
    <citation type="journal article" date="2004" name="Mol. Endocrinol.">
        <title>Orphan nuclear receptor small heterodimer partner, a novel corepressor for a basic helix-loop-helix transcription factor BETA2/neuroD.</title>
        <authorList>
            <person name="Kim J.Y."/>
            <person name="Chu K."/>
            <person name="Kim H.J."/>
            <person name="Seong H.A."/>
            <person name="Park K.C."/>
            <person name="Sanyal S."/>
            <person name="Takeda J."/>
            <person name="Ha H."/>
            <person name="Shong M."/>
            <person name="Tsai M.J."/>
            <person name="Choi H.S."/>
        </authorList>
    </citation>
    <scope>FUNCTION</scope>
    <scope>HETERODIMERIZATION</scope>
    <scope>INTERACTION WITH ID2 AND NEUROD1</scope>
    <scope>SUBCELLULAR LOCATION</scope>
</reference>
<reference key="9">
    <citation type="journal article" date="2017" name="Arch. Biochem. Biophys.">
        <title>Circadian rhythmicity: A functional connection between differentiated embryonic chondrocyte-1 (DEC1) and small heterodimer partner (SHP).</title>
        <authorList>
            <person name="Marczak M.M."/>
            <person name="Yan B."/>
        </authorList>
    </citation>
    <scope>SUBCELLULAR LOCATION</scope>
</reference>
<reference key="10">
    <citation type="journal article" date="2017" name="Sci. Rep.">
        <title>RNA helicase DDX3 maintains lipid homeostasis through upregulation of the microsomal triglyceride transfer protein by interacting with HNF4 and SHP.</title>
        <authorList>
            <person name="Tsai T.Y."/>
            <person name="Wang W.T."/>
            <person name="Li H.K."/>
            <person name="Chen W.J."/>
            <person name="Tsai Y.H."/>
            <person name="Chao C.H."/>
            <person name="Wu Lee Y.H."/>
        </authorList>
    </citation>
    <scope>INTERACTION WITH DDX3X AND HNF4A</scope>
</reference>
<reference key="11">
    <citation type="journal article" date="2005" name="Nat. Struct. Mol. Biol.">
        <title>Modulation of human nuclear receptor LRH-1 activity by phospholipids and SHP.</title>
        <authorList>
            <person name="Ortlund E.A."/>
            <person name="Lee Y."/>
            <person name="Solomon I.H."/>
            <person name="Hager J.M."/>
            <person name="Safi R."/>
            <person name="Choi Y."/>
            <person name="Guan Z."/>
            <person name="Tripathy A."/>
            <person name="Raetz C.R.H."/>
            <person name="McDonnell D.P."/>
            <person name="Moore D.D."/>
            <person name="Redinbo M.R."/>
        </authorList>
    </citation>
    <scope>X-RAY CRYSTALLOGRAPHY (1.9 ANGSTROMS) OF 15-28 IN COMPLEX WITH NR5A2</scope>
</reference>
<reference evidence="12" key="12">
    <citation type="journal article" date="2012" name="Nat. Struct. Mol. Biol.">
        <title>Antidiabetic phospholipid-nuclear receptor complex reveals the mechanism for phospholipid-driven gene regulation.</title>
        <authorList>
            <person name="Musille P.M."/>
            <person name="Pathak M."/>
            <person name="Lauer J.L."/>
            <person name="Hudson W.H."/>
            <person name="Griffin P.R."/>
            <person name="Ortlund E.A."/>
        </authorList>
    </citation>
    <scope>X-RAY CRYSTALLOGRAPHY (1.90 ANGSTROMS) OF 15-28 IN COMPLEX WITH NR5A2</scope>
    <scope>FUNCTION</scope>
    <scope>INTERACTION WITH NR5A2</scope>
</reference>
<reference key="13">
    <citation type="journal article" date="2011" name="Mol. Cell. Biol.">
        <title>Arginine methylation by PRMT5 at a naturally occurring mutation site is critical for liver metabolic regulation by small heterodimer partner.</title>
        <authorList>
            <person name="Kanamaluru D."/>
            <person name="Xiao Z."/>
            <person name="Fang S."/>
            <person name="Choi S.E."/>
            <person name="Kim D.H."/>
            <person name="Veenstra T.D."/>
            <person name="Kemper J.K."/>
        </authorList>
    </citation>
    <scope>VARIANT TRP-57</scope>
</reference>